<name>TCTP_MOUSE</name>
<reference key="1">
    <citation type="journal article" date="1988" name="Nucleic Acids Res.">
        <title>Nucleotide sequence of a major messenger RNA for a 21 kilodalton polypeptide that is under translational control in mouse tumor cells.</title>
        <authorList>
            <person name="Makrides S."/>
            <person name="Chitpatima S.T."/>
            <person name="Bandyopadhyay R."/>
            <person name="Brawerman G."/>
        </authorList>
    </citation>
    <scope>NUCLEOTIDE SEQUENCE [MRNA]</scope>
</reference>
<reference key="2">
    <citation type="journal article" date="1989" name="Biochem. Int.">
        <title>The growth-related protein P23 of the Ehrlich ascites tumor: translational control, cloning and primary structure.</title>
        <authorList>
            <person name="Boehm H."/>
            <person name="Beendorf R."/>
            <person name="Gaestel M."/>
            <person name="Gross B."/>
            <person name="Nuernberg P."/>
            <person name="Kraft R."/>
            <person name="Otto A."/>
            <person name="Bielka H."/>
        </authorList>
    </citation>
    <scope>NUCLEOTIDE SEQUENCE [MRNA]</scope>
    <scope>PARTIAL PROTEIN SEQUENCE</scope>
    <scope>DEVELOPMENTAL STAGE</scope>
</reference>
<reference key="3">
    <citation type="journal article" date="2003" name="Genomics">
        <title>Genomic organization and expression of mouse Tpt1 gene.</title>
        <authorList>
            <person name="Fiucci G."/>
            <person name="Lespagnol A."/>
            <person name="Stumptner-Cuvelette P."/>
            <person name="Beaucourt S."/>
            <person name="Duflaut D."/>
            <person name="Susini L."/>
            <person name="Amson R."/>
            <person name="Telerman A."/>
        </authorList>
    </citation>
    <scope>NUCLEOTIDE SEQUENCE [GENOMIC DNA]</scope>
    <source>
        <strain>129/Sv</strain>
    </source>
</reference>
<reference key="4">
    <citation type="journal article" date="2005" name="Science">
        <title>The transcriptional landscape of the mammalian genome.</title>
        <authorList>
            <person name="Carninci P."/>
            <person name="Kasukawa T."/>
            <person name="Katayama S."/>
            <person name="Gough J."/>
            <person name="Frith M.C."/>
            <person name="Maeda N."/>
            <person name="Oyama R."/>
            <person name="Ravasi T."/>
            <person name="Lenhard B."/>
            <person name="Wells C."/>
            <person name="Kodzius R."/>
            <person name="Shimokawa K."/>
            <person name="Bajic V.B."/>
            <person name="Brenner S.E."/>
            <person name="Batalov S."/>
            <person name="Forrest A.R."/>
            <person name="Zavolan M."/>
            <person name="Davis M.J."/>
            <person name="Wilming L.G."/>
            <person name="Aidinis V."/>
            <person name="Allen J.E."/>
            <person name="Ambesi-Impiombato A."/>
            <person name="Apweiler R."/>
            <person name="Aturaliya R.N."/>
            <person name="Bailey T.L."/>
            <person name="Bansal M."/>
            <person name="Baxter L."/>
            <person name="Beisel K.W."/>
            <person name="Bersano T."/>
            <person name="Bono H."/>
            <person name="Chalk A.M."/>
            <person name="Chiu K.P."/>
            <person name="Choudhary V."/>
            <person name="Christoffels A."/>
            <person name="Clutterbuck D.R."/>
            <person name="Crowe M.L."/>
            <person name="Dalla E."/>
            <person name="Dalrymple B.P."/>
            <person name="de Bono B."/>
            <person name="Della Gatta G."/>
            <person name="di Bernardo D."/>
            <person name="Down T."/>
            <person name="Engstrom P."/>
            <person name="Fagiolini M."/>
            <person name="Faulkner G."/>
            <person name="Fletcher C.F."/>
            <person name="Fukushima T."/>
            <person name="Furuno M."/>
            <person name="Futaki S."/>
            <person name="Gariboldi M."/>
            <person name="Georgii-Hemming P."/>
            <person name="Gingeras T.R."/>
            <person name="Gojobori T."/>
            <person name="Green R.E."/>
            <person name="Gustincich S."/>
            <person name="Harbers M."/>
            <person name="Hayashi Y."/>
            <person name="Hensch T.K."/>
            <person name="Hirokawa N."/>
            <person name="Hill D."/>
            <person name="Huminiecki L."/>
            <person name="Iacono M."/>
            <person name="Ikeo K."/>
            <person name="Iwama A."/>
            <person name="Ishikawa T."/>
            <person name="Jakt M."/>
            <person name="Kanapin A."/>
            <person name="Katoh M."/>
            <person name="Kawasawa Y."/>
            <person name="Kelso J."/>
            <person name="Kitamura H."/>
            <person name="Kitano H."/>
            <person name="Kollias G."/>
            <person name="Krishnan S.P."/>
            <person name="Kruger A."/>
            <person name="Kummerfeld S.K."/>
            <person name="Kurochkin I.V."/>
            <person name="Lareau L.F."/>
            <person name="Lazarevic D."/>
            <person name="Lipovich L."/>
            <person name="Liu J."/>
            <person name="Liuni S."/>
            <person name="McWilliam S."/>
            <person name="Madan Babu M."/>
            <person name="Madera M."/>
            <person name="Marchionni L."/>
            <person name="Matsuda H."/>
            <person name="Matsuzawa S."/>
            <person name="Miki H."/>
            <person name="Mignone F."/>
            <person name="Miyake S."/>
            <person name="Morris K."/>
            <person name="Mottagui-Tabar S."/>
            <person name="Mulder N."/>
            <person name="Nakano N."/>
            <person name="Nakauchi H."/>
            <person name="Ng P."/>
            <person name="Nilsson R."/>
            <person name="Nishiguchi S."/>
            <person name="Nishikawa S."/>
            <person name="Nori F."/>
            <person name="Ohara O."/>
            <person name="Okazaki Y."/>
            <person name="Orlando V."/>
            <person name="Pang K.C."/>
            <person name="Pavan W.J."/>
            <person name="Pavesi G."/>
            <person name="Pesole G."/>
            <person name="Petrovsky N."/>
            <person name="Piazza S."/>
            <person name="Reed J."/>
            <person name="Reid J.F."/>
            <person name="Ring B.Z."/>
            <person name="Ringwald M."/>
            <person name="Rost B."/>
            <person name="Ruan Y."/>
            <person name="Salzberg S.L."/>
            <person name="Sandelin A."/>
            <person name="Schneider C."/>
            <person name="Schoenbach C."/>
            <person name="Sekiguchi K."/>
            <person name="Semple C.A."/>
            <person name="Seno S."/>
            <person name="Sessa L."/>
            <person name="Sheng Y."/>
            <person name="Shibata Y."/>
            <person name="Shimada H."/>
            <person name="Shimada K."/>
            <person name="Silva D."/>
            <person name="Sinclair B."/>
            <person name="Sperling S."/>
            <person name="Stupka E."/>
            <person name="Sugiura K."/>
            <person name="Sultana R."/>
            <person name="Takenaka Y."/>
            <person name="Taki K."/>
            <person name="Tammoja K."/>
            <person name="Tan S.L."/>
            <person name="Tang S."/>
            <person name="Taylor M.S."/>
            <person name="Tegner J."/>
            <person name="Teichmann S.A."/>
            <person name="Ueda H.R."/>
            <person name="van Nimwegen E."/>
            <person name="Verardo R."/>
            <person name="Wei C.L."/>
            <person name="Yagi K."/>
            <person name="Yamanishi H."/>
            <person name="Zabarovsky E."/>
            <person name="Zhu S."/>
            <person name="Zimmer A."/>
            <person name="Hide W."/>
            <person name="Bult C."/>
            <person name="Grimmond S.M."/>
            <person name="Teasdale R.D."/>
            <person name="Liu E.T."/>
            <person name="Brusic V."/>
            <person name="Quackenbush J."/>
            <person name="Wahlestedt C."/>
            <person name="Mattick J.S."/>
            <person name="Hume D.A."/>
            <person name="Kai C."/>
            <person name="Sasaki D."/>
            <person name="Tomaru Y."/>
            <person name="Fukuda S."/>
            <person name="Kanamori-Katayama M."/>
            <person name="Suzuki M."/>
            <person name="Aoki J."/>
            <person name="Arakawa T."/>
            <person name="Iida J."/>
            <person name="Imamura K."/>
            <person name="Itoh M."/>
            <person name="Kato T."/>
            <person name="Kawaji H."/>
            <person name="Kawagashira N."/>
            <person name="Kawashima T."/>
            <person name="Kojima M."/>
            <person name="Kondo S."/>
            <person name="Konno H."/>
            <person name="Nakano K."/>
            <person name="Ninomiya N."/>
            <person name="Nishio T."/>
            <person name="Okada M."/>
            <person name="Plessy C."/>
            <person name="Shibata K."/>
            <person name="Shiraki T."/>
            <person name="Suzuki S."/>
            <person name="Tagami M."/>
            <person name="Waki K."/>
            <person name="Watahiki A."/>
            <person name="Okamura-Oho Y."/>
            <person name="Suzuki H."/>
            <person name="Kawai J."/>
            <person name="Hayashizaki Y."/>
        </authorList>
    </citation>
    <scope>NUCLEOTIDE SEQUENCE [LARGE SCALE MRNA]</scope>
    <source>
        <strain>BALB/cJ</strain>
        <strain>C57BL/6J</strain>
        <strain>DBA/2J</strain>
        <strain>NOD</strain>
        <tissue>Bone marrow</tissue>
        <tissue>Brain</tissue>
        <tissue>Placenta</tissue>
        <tissue>Thymus</tissue>
    </source>
</reference>
<reference key="5">
    <citation type="journal article" date="2004" name="Genome Res.">
        <title>The status, quality, and expansion of the NIH full-length cDNA project: the Mammalian Gene Collection (MGC).</title>
        <authorList>
            <consortium name="The MGC Project Team"/>
        </authorList>
    </citation>
    <scope>NUCLEOTIDE SEQUENCE [LARGE SCALE MRNA]</scope>
    <source>
        <strain>C57BL/6J</strain>
        <tissue>Brain</tissue>
    </source>
</reference>
<reference key="6">
    <citation type="submission" date="2007-07" db="UniProtKB">
        <authorList>
            <person name="Lubec G."/>
            <person name="Klug S."/>
            <person name="Yang J.W."/>
            <person name="Zigmond M."/>
        </authorList>
    </citation>
    <scope>PROTEIN SEQUENCE OF 6-19</scope>
    <scope>IDENTIFICATION BY MASS SPECTROMETRY</scope>
    <source>
        <tissue>Brain</tissue>
        <tissue>Hippocampus</tissue>
    </source>
</reference>
<reference key="7">
    <citation type="journal article" date="2010" name="Cell">
        <title>A tissue-specific atlas of mouse protein phosphorylation and expression.</title>
        <authorList>
            <person name="Huttlin E.L."/>
            <person name="Jedrychowski M.P."/>
            <person name="Elias J.E."/>
            <person name="Goswami T."/>
            <person name="Rad R."/>
            <person name="Beausoleil S.A."/>
            <person name="Villen J."/>
            <person name="Haas W."/>
            <person name="Sowa M.E."/>
            <person name="Gygi S.P."/>
        </authorList>
    </citation>
    <scope>PHOSPHORYLATION [LARGE SCALE ANALYSIS] AT SER-46</scope>
    <scope>IDENTIFICATION BY MASS SPECTROMETRY [LARGE SCALE ANALYSIS]</scope>
    <source>
        <tissue>Brain</tissue>
        <tissue>Brown adipose tissue</tissue>
        <tissue>Heart</tissue>
        <tissue>Kidney</tissue>
        <tissue>Liver</tissue>
        <tissue>Lung</tissue>
        <tissue>Pancreas</tissue>
        <tissue>Spleen</tissue>
        <tissue>Testis</tissue>
    </source>
</reference>
<dbReference type="EMBL" id="X06407">
    <property type="protein sequence ID" value="CAA29697.1"/>
    <property type="molecule type" value="mRNA"/>
</dbReference>
<dbReference type="EMBL" id="AY186881">
    <property type="protein sequence ID" value="AAP23875.1"/>
    <property type="molecule type" value="Genomic_DNA"/>
</dbReference>
<dbReference type="EMBL" id="AK149695">
    <property type="protein sequence ID" value="BAE29032.1"/>
    <property type="molecule type" value="mRNA"/>
</dbReference>
<dbReference type="EMBL" id="AK150300">
    <property type="protein sequence ID" value="BAE29452.1"/>
    <property type="molecule type" value="mRNA"/>
</dbReference>
<dbReference type="EMBL" id="AK150500">
    <property type="protein sequence ID" value="BAE29613.1"/>
    <property type="molecule type" value="mRNA"/>
</dbReference>
<dbReference type="EMBL" id="AK150858">
    <property type="protein sequence ID" value="BAE29913.1"/>
    <property type="molecule type" value="mRNA"/>
</dbReference>
<dbReference type="EMBL" id="AK151059">
    <property type="protein sequence ID" value="BAE30076.1"/>
    <property type="molecule type" value="mRNA"/>
</dbReference>
<dbReference type="EMBL" id="AK151266">
    <property type="protein sequence ID" value="BAE30253.1"/>
    <property type="molecule type" value="mRNA"/>
</dbReference>
<dbReference type="EMBL" id="AK151375">
    <property type="protein sequence ID" value="BAE30347.1"/>
    <property type="molecule type" value="mRNA"/>
</dbReference>
<dbReference type="EMBL" id="AK151894">
    <property type="protein sequence ID" value="BAE30778.1"/>
    <property type="molecule type" value="mRNA"/>
</dbReference>
<dbReference type="EMBL" id="AK152690">
    <property type="protein sequence ID" value="BAE31421.1"/>
    <property type="molecule type" value="mRNA"/>
</dbReference>
<dbReference type="EMBL" id="AK152808">
    <property type="protein sequence ID" value="BAE31513.1"/>
    <property type="molecule type" value="mRNA"/>
</dbReference>
<dbReference type="EMBL" id="AK159516">
    <property type="protein sequence ID" value="BAE35146.1"/>
    <property type="molecule type" value="mRNA"/>
</dbReference>
<dbReference type="EMBL" id="AK159565">
    <property type="protein sequence ID" value="BAE35188.1"/>
    <property type="molecule type" value="mRNA"/>
</dbReference>
<dbReference type="EMBL" id="AK165736">
    <property type="protein sequence ID" value="BAE38361.1"/>
    <property type="molecule type" value="mRNA"/>
</dbReference>
<dbReference type="EMBL" id="AK166584">
    <property type="protein sequence ID" value="BAE38873.1"/>
    <property type="molecule type" value="mRNA"/>
</dbReference>
<dbReference type="EMBL" id="AK167413">
    <property type="protein sequence ID" value="BAE39502.1"/>
    <property type="molecule type" value="mRNA"/>
</dbReference>
<dbReference type="EMBL" id="AK167936">
    <property type="protein sequence ID" value="BAE39940.1"/>
    <property type="molecule type" value="mRNA"/>
</dbReference>
<dbReference type="EMBL" id="AK168151">
    <property type="protein sequence ID" value="BAE40116.1"/>
    <property type="molecule type" value="mRNA"/>
</dbReference>
<dbReference type="EMBL" id="AK169730">
    <property type="protein sequence ID" value="BAE41334.1"/>
    <property type="molecule type" value="mRNA"/>
</dbReference>
<dbReference type="EMBL" id="BC092381">
    <property type="protein sequence ID" value="AAH92381.1"/>
    <property type="molecule type" value="mRNA"/>
</dbReference>
<dbReference type="CCDS" id="CCDS36980.1"/>
<dbReference type="PIR" id="S00775">
    <property type="entry name" value="S00775"/>
</dbReference>
<dbReference type="RefSeq" id="NP_033455.1">
    <property type="nucleotide sequence ID" value="NM_009429.4"/>
</dbReference>
<dbReference type="PDB" id="5O9K">
    <property type="method" value="X-ray"/>
    <property type="resolution" value="4.01 A"/>
    <property type="chains" value="A/B=1-172"/>
</dbReference>
<dbReference type="PDBsum" id="5O9K"/>
<dbReference type="SMR" id="P63028"/>
<dbReference type="BioGRID" id="204334">
    <property type="interactions" value="89"/>
</dbReference>
<dbReference type="FunCoup" id="P63028">
    <property type="interactions" value="2455"/>
</dbReference>
<dbReference type="IntAct" id="P63028">
    <property type="interactions" value="11"/>
</dbReference>
<dbReference type="MINT" id="P63028"/>
<dbReference type="STRING" id="10090.ENSMUSP00000106519"/>
<dbReference type="GlyGen" id="P63028">
    <property type="glycosylation" value="1 site, 1 O-linked glycan (1 site)"/>
</dbReference>
<dbReference type="iPTMnet" id="P63028"/>
<dbReference type="PhosphoSitePlus" id="P63028"/>
<dbReference type="SwissPalm" id="P63028"/>
<dbReference type="REPRODUCTION-2DPAGE" id="IPI00129685"/>
<dbReference type="REPRODUCTION-2DPAGE" id="P63028"/>
<dbReference type="jPOST" id="P63028"/>
<dbReference type="PaxDb" id="10090-ENSMUSP00000106519"/>
<dbReference type="PeptideAtlas" id="P63028"/>
<dbReference type="ProteomicsDB" id="262843"/>
<dbReference type="Pumba" id="P63028"/>
<dbReference type="TopDownProteomics" id="P63028"/>
<dbReference type="Antibodypedia" id="23600">
    <property type="antibodies" value="562 antibodies from 40 providers"/>
</dbReference>
<dbReference type="DNASU" id="22070"/>
<dbReference type="Ensembl" id="ENSMUST00000110894.9">
    <property type="protein sequence ID" value="ENSMUSP00000106519.3"/>
    <property type="gene ID" value="ENSMUSG00000060126.15"/>
</dbReference>
<dbReference type="GeneID" id="22070"/>
<dbReference type="KEGG" id="mmu:22070"/>
<dbReference type="UCSC" id="uc007uqz.2">
    <property type="organism name" value="mouse"/>
</dbReference>
<dbReference type="AGR" id="MGI:104890"/>
<dbReference type="CTD" id="7178"/>
<dbReference type="MGI" id="MGI:104890">
    <property type="gene designation" value="Tpt1"/>
</dbReference>
<dbReference type="VEuPathDB" id="HostDB:ENSMUSG00000060126"/>
<dbReference type="eggNOG" id="KOG1727">
    <property type="taxonomic scope" value="Eukaryota"/>
</dbReference>
<dbReference type="GeneTree" id="ENSGT00390000006051"/>
<dbReference type="InParanoid" id="P63028"/>
<dbReference type="OMA" id="CAMITEG"/>
<dbReference type="OrthoDB" id="5988874at2759"/>
<dbReference type="PhylomeDB" id="P63028"/>
<dbReference type="TreeFam" id="TF300238"/>
<dbReference type="BioGRID-ORCS" id="22070">
    <property type="hits" value="25 hits in 80 CRISPR screens"/>
</dbReference>
<dbReference type="ChiTaRS" id="Tpt1">
    <property type="organism name" value="mouse"/>
</dbReference>
<dbReference type="PRO" id="PR:P63028"/>
<dbReference type="Proteomes" id="UP000000589">
    <property type="component" value="Chromosome 14"/>
</dbReference>
<dbReference type="RNAct" id="P63028">
    <property type="molecule type" value="protein"/>
</dbReference>
<dbReference type="Bgee" id="ENSMUSG00000060126">
    <property type="expression patterns" value="Expressed in ventricular zone and 64 other cell types or tissues"/>
</dbReference>
<dbReference type="ExpressionAtlas" id="P63028">
    <property type="expression patterns" value="baseline and differential"/>
</dbReference>
<dbReference type="GO" id="GO:0005881">
    <property type="term" value="C:cytoplasmic microtubule"/>
    <property type="evidence" value="ECO:0007669"/>
    <property type="project" value="Ensembl"/>
</dbReference>
<dbReference type="GO" id="GO:0005829">
    <property type="term" value="C:cytosol"/>
    <property type="evidence" value="ECO:0007669"/>
    <property type="project" value="Ensembl"/>
</dbReference>
<dbReference type="GO" id="GO:0005615">
    <property type="term" value="C:extracellular space"/>
    <property type="evidence" value="ECO:0007005"/>
    <property type="project" value="BHF-UCL"/>
</dbReference>
<dbReference type="GO" id="GO:0005771">
    <property type="term" value="C:multivesicular body"/>
    <property type="evidence" value="ECO:0000266"/>
    <property type="project" value="MGI"/>
</dbReference>
<dbReference type="GO" id="GO:0005654">
    <property type="term" value="C:nucleoplasm"/>
    <property type="evidence" value="ECO:0000314"/>
    <property type="project" value="BHF-UCL"/>
</dbReference>
<dbReference type="GO" id="GO:0005634">
    <property type="term" value="C:nucleus"/>
    <property type="evidence" value="ECO:0000266"/>
    <property type="project" value="MGI"/>
</dbReference>
<dbReference type="GO" id="GO:0000922">
    <property type="term" value="C:spindle pole"/>
    <property type="evidence" value="ECO:0000250"/>
    <property type="project" value="UniProtKB"/>
</dbReference>
<dbReference type="GO" id="GO:0005509">
    <property type="term" value="F:calcium ion binding"/>
    <property type="evidence" value="ECO:0007669"/>
    <property type="project" value="Ensembl"/>
</dbReference>
<dbReference type="GO" id="GO:0140297">
    <property type="term" value="F:DNA-binding transcription factor binding"/>
    <property type="evidence" value="ECO:0000353"/>
    <property type="project" value="BHF-UCL"/>
</dbReference>
<dbReference type="GO" id="GO:2000384">
    <property type="term" value="P:negative regulation of ectoderm development"/>
    <property type="evidence" value="ECO:0000315"/>
    <property type="project" value="BHF-UCL"/>
</dbReference>
<dbReference type="GO" id="GO:1902230">
    <property type="term" value="P:negative regulation of intrinsic apoptotic signaling pathway in response to DNA damage"/>
    <property type="evidence" value="ECO:0000266"/>
    <property type="project" value="MGI"/>
</dbReference>
<dbReference type="GO" id="GO:0009615">
    <property type="term" value="P:response to virus"/>
    <property type="evidence" value="ECO:0007669"/>
    <property type="project" value="Ensembl"/>
</dbReference>
<dbReference type="GO" id="GO:0007283">
    <property type="term" value="P:spermatogenesis"/>
    <property type="evidence" value="ECO:0007669"/>
    <property type="project" value="Ensembl"/>
</dbReference>
<dbReference type="GO" id="GO:0019827">
    <property type="term" value="P:stem cell population maintenance"/>
    <property type="evidence" value="ECO:0000315"/>
    <property type="project" value="BHF-UCL"/>
</dbReference>
<dbReference type="DisProt" id="DP02800"/>
<dbReference type="FunFam" id="2.170.150.10:FF:000001">
    <property type="entry name" value="Tumor protein, translationally-controlled 1"/>
    <property type="match status" value="1"/>
</dbReference>
<dbReference type="Gene3D" id="2.170.150.10">
    <property type="entry name" value="Metal Binding Protein, Guanine Nucleotide Exchange Factor, Chain A"/>
    <property type="match status" value="1"/>
</dbReference>
<dbReference type="InterPro" id="IPR011057">
    <property type="entry name" value="Mss4-like_sf"/>
</dbReference>
<dbReference type="InterPro" id="IPR011323">
    <property type="entry name" value="Mss4/transl-control_tumour"/>
</dbReference>
<dbReference type="InterPro" id="IPR034737">
    <property type="entry name" value="TCTP"/>
</dbReference>
<dbReference type="InterPro" id="IPR018103">
    <property type="entry name" value="Translation_control_tumour_CS"/>
</dbReference>
<dbReference type="InterPro" id="IPR018105">
    <property type="entry name" value="Translational_control_tumour_p"/>
</dbReference>
<dbReference type="PANTHER" id="PTHR11991">
    <property type="entry name" value="TRANSLATIONALLY CONTROLLED TUMOR PROTEIN-RELATED"/>
    <property type="match status" value="1"/>
</dbReference>
<dbReference type="PANTHER" id="PTHR11991:SF0">
    <property type="entry name" value="TRANSLATIONALLY-CONTROLLED TUMOR PROTEIN"/>
    <property type="match status" value="1"/>
</dbReference>
<dbReference type="Pfam" id="PF00838">
    <property type="entry name" value="TCTP"/>
    <property type="match status" value="1"/>
</dbReference>
<dbReference type="PRINTS" id="PR01653">
    <property type="entry name" value="TCTPROTEIN"/>
</dbReference>
<dbReference type="SUPFAM" id="SSF51316">
    <property type="entry name" value="Mss4-like"/>
    <property type="match status" value="1"/>
</dbReference>
<dbReference type="PROSITE" id="PS01002">
    <property type="entry name" value="TCTP_1"/>
    <property type="match status" value="1"/>
</dbReference>
<dbReference type="PROSITE" id="PS01003">
    <property type="entry name" value="TCTP_2"/>
    <property type="match status" value="1"/>
</dbReference>
<dbReference type="PROSITE" id="PS51797">
    <property type="entry name" value="TCTP_3"/>
    <property type="match status" value="1"/>
</dbReference>
<evidence type="ECO:0000250" key="1">
    <source>
        <dbReference type="UniProtKB" id="P13693"/>
    </source>
</evidence>
<evidence type="ECO:0000250" key="2">
    <source>
        <dbReference type="UniProtKB" id="P63029"/>
    </source>
</evidence>
<evidence type="ECO:0000255" key="3">
    <source>
        <dbReference type="PROSITE-ProRule" id="PRU01133"/>
    </source>
</evidence>
<evidence type="ECO:0000269" key="4">
    <source>
    </source>
</evidence>
<evidence type="ECO:0000305" key="5"/>
<evidence type="ECO:0007744" key="6">
    <source>
    </source>
</evidence>
<organism>
    <name type="scientific">Mus musculus</name>
    <name type="common">Mouse</name>
    <dbReference type="NCBI Taxonomy" id="10090"/>
    <lineage>
        <taxon>Eukaryota</taxon>
        <taxon>Metazoa</taxon>
        <taxon>Chordata</taxon>
        <taxon>Craniata</taxon>
        <taxon>Vertebrata</taxon>
        <taxon>Euteleostomi</taxon>
        <taxon>Mammalia</taxon>
        <taxon>Eutheria</taxon>
        <taxon>Euarchontoglires</taxon>
        <taxon>Glires</taxon>
        <taxon>Rodentia</taxon>
        <taxon>Myomorpha</taxon>
        <taxon>Muroidea</taxon>
        <taxon>Muridae</taxon>
        <taxon>Murinae</taxon>
        <taxon>Mus</taxon>
        <taxon>Mus</taxon>
    </lineage>
</organism>
<comment type="function">
    <text evidence="1">Involved in calcium binding and microtubule stabilization (By similarity). Acts as a negative regulator of TSC22D1-mediated apoptosis, via interaction with and destabilization of TSC22D1 protein (By similarity).</text>
</comment>
<comment type="subunit">
    <text evidence="1 2">Homodimer (By similarity). Interacts with STEAP3 (By similarity). Interacts with TSC22D1; interaction results in the destabilization of TSC22D1 protein (By similarity).</text>
</comment>
<comment type="interaction">
    <interactant intactId="EBI-1635228">
        <id>P63028</id>
    </interactant>
    <interactant intactId="EBI-641864">
        <id>P09405</id>
        <label>Ncl</label>
    </interactant>
    <organismsDiffer>false</organismsDiffer>
    <experiments>4</experiments>
</comment>
<comment type="subcellular location">
    <subcellularLocation>
        <location evidence="1">Cytoplasm</location>
    </subcellularLocation>
</comment>
<comment type="developmental stage">
    <text evidence="4">Preferentially synthesized in cells of the early growth phase of Ehrlich ascites tumor.</text>
</comment>
<comment type="similarity">
    <text evidence="3">Belongs to the TCTP family.</text>
</comment>
<gene>
    <name type="primary">Tpt1</name>
    <name type="synonym">Trt</name>
</gene>
<proteinExistence type="evidence at protein level"/>
<feature type="chain" id="PRO_0000211269" description="Translationally-controlled tumor protein">
    <location>
        <begin position="1"/>
        <end position="172"/>
    </location>
</feature>
<feature type="domain" description="TCTP" evidence="3">
    <location>
        <begin position="1"/>
        <end position="172"/>
    </location>
</feature>
<feature type="region of interest" description="Required for reduction of TSC22D1 protein stability" evidence="1">
    <location>
        <begin position="70"/>
        <end position="172"/>
    </location>
</feature>
<feature type="modified residue" description="Phosphoserine" evidence="6">
    <location>
        <position position="46"/>
    </location>
</feature>
<feature type="modified residue" description="Phosphoserine" evidence="1">
    <location>
        <position position="53"/>
    </location>
</feature>
<feature type="modified residue" description="Phosphoserine; by PLK1" evidence="1">
    <location>
        <position position="64"/>
    </location>
</feature>
<feature type="sequence conflict" description="In Ref. 4; BAE30347." evidence="5" ref="4">
    <original>I</original>
    <variation>N</variation>
    <location>
        <position position="17"/>
    </location>
</feature>
<feature type="sequence conflict" description="In Ref. 4; BAE35146." evidence="5" ref="4">
    <original>A</original>
    <variation>V</variation>
    <location>
        <position position="52"/>
    </location>
</feature>
<feature type="sequence conflict" description="In Ref. 4; BAE35188." evidence="5" ref="4">
    <original>P</original>
    <variation>Q</variation>
    <location>
        <position position="57"/>
    </location>
</feature>
<feature type="sequence conflict" description="In Ref. 4; BAE29613/BAE38361." evidence="5" ref="4">
    <original>E</original>
    <variation>G</variation>
    <location>
        <position position="80"/>
    </location>
</feature>
<sequence length="172" mass="19462">MIIYRDLISHDELFSDIYKIREIADGLCLEVEGKMVSRTEGAIDDSLIGGNASAEGPEGEGTESTVVTGVDIVMNHHLQETSFTKEAYKKYIKDYMKSLKGKLEEQKPERVKPFMTGAAEQIKHILANFNNYQFFIGENMNPDGMVALLDYREDGVTPFMIFFKDGLEMEKC</sequence>
<protein>
    <recommendedName>
        <fullName>Translationally-controlled tumor protein</fullName>
        <shortName>TCTP</shortName>
    </recommendedName>
    <alternativeName>
        <fullName>21 kDa polypeptide</fullName>
    </alternativeName>
    <alternativeName>
        <fullName>p21</fullName>
    </alternativeName>
    <alternativeName>
        <fullName>p23</fullName>
    </alternativeName>
</protein>
<accession>P63028</accession>
<accession>P14701</accession>
<accession>Q3TMT0</accession>
<accession>Q3TWS8</accession>
<accession>Q3TWX0</accession>
<accession>Q3UAG7</accession>
<accession>Q569M9</accession>
<keyword id="KW-0002">3D-structure</keyword>
<keyword id="KW-0106">Calcium</keyword>
<keyword id="KW-0963">Cytoplasm</keyword>
<keyword id="KW-0903">Direct protein sequencing</keyword>
<keyword id="KW-0597">Phosphoprotein</keyword>
<keyword id="KW-1185">Reference proteome</keyword>